<keyword id="KW-0067">ATP-binding</keyword>
<keyword id="KW-0256">Endoplasmic reticulum</keyword>
<keyword id="KW-0418">Kinase</keyword>
<keyword id="KW-0472">Membrane</keyword>
<keyword id="KW-0547">Nucleotide-binding</keyword>
<keyword id="KW-0597">Phosphoprotein</keyword>
<keyword id="KW-0652">Protein synthesis inhibitor</keyword>
<keyword id="KW-1185">Reference proteome</keyword>
<keyword id="KW-0677">Repeat</keyword>
<keyword id="KW-0723">Serine/threonine-protein kinase</keyword>
<keyword id="KW-0808">Transferase</keyword>
<keyword id="KW-0812">Transmembrane</keyword>
<keyword id="KW-1133">Transmembrane helix</keyword>
<protein>
    <recommendedName>
        <fullName evidence="8">Eukaryotic translation initiation factor 2-alpha kinase PK4</fullName>
        <shortName evidence="8">eIF2alpha kinase PK4</shortName>
        <ecNumber evidence="6 7">2.7.11.1</ecNumber>
    </recommendedName>
    <alternativeName>
        <fullName evidence="8">Protein kinase PK4</fullName>
        <shortName evidence="8">PfPK4</shortName>
    </alternativeName>
</protein>
<gene>
    <name evidence="8" type="primary">PK4</name>
    <name evidence="11" type="ORF">PF3D7_0628200</name>
    <name evidence="9" type="ORF">PFF1370w</name>
</gene>
<sequence length="3072" mass="364331">MCNFIKKGIRFNGDKYIFLFDIFIKKYLLNVFVANILWEEENNICFLNRLKNKRKKSILFLKEEYLRYLMILNKEEKNKKKRLKKIYECIKVFSIKEFRWLINKLEIIYFYFFCHLLLLCIFQNIFLLTYMSKEYFLKNIHDYMINILSNDIKFNTCIEFTHNDKYEQKCITMAYYDFLLNKKGKLKKRNKYYDIKNIEPLTGKDKNLYSYYNFSPFFPMSSSDIINVNTNDKISNILWNDKYIDTLNHVNMKKKDIPLNIHSNNILMNNYAYRKYVRSYMIKKRINDLILYNLKNIFEKINNIEKLTNINNFMNFKKEYEKVSKEVCNNNNNNYDPSDYMLILPNSSKDHALYNNINNDEYMYKKFCNFISQAREIKKQREKEKCHRDEKCDRGENYDRGEKYDRDEKYDKEEKGLKEDNYRDVNEWNSNKSERCNKIYPSDYKFFLSEDKKYDTPYYSNERVDFHNSDIYMNDMDEELYYSSYHNNHHNNDITYNSNVYKRMLNEVIHPSVESNDVKKGPLNNDNIKNKESNVYEINDIIYQLNGEKKMNTNMCEKRGNKIFDSNNFHNINERKKKILDENDMITIDNNIDKKENILFPYFHMEILKDNEMNITKYYKDKQYYGQYKYDENIYIYDLIVLDTSGYIYKVSTDGSYHWKRKIVDHIQDYSNIEEKDDERKVLKKRNKLNEKDMYESNNKYESNMYDMNTYESNKYDINTYDKNISDSTKAHQNIYVLKKNVYDMNYDSKRALKISPYHNYFNTSIINSINRDKLKHSKPLYKNNIKTNDDNKKLRENKTKNKRLVSNYLGNLFYINENNEVIPLNINIKDVVNNSPFKSPLFPNMVFIGSRESTIINLDYDTGHVLRKYDEASNELLDKPPKKKSRKNKSIKNVKDINDNMKLYKEGSQNVEELSFTEEENKKKSILEGEKIEVASLNNEENMNKGFVCEKDDKINNYDNDEDDLFYEQYEDNNDNDNNKNDNNKNDNNKNDNNKNDNNNNNNNNNNNSYYYYNINGNASDDILVHSKNELLNNTYINKTNIKDENSNNNESFLNKIDGMNNFKLLPKRNMKRNRKKNLLKRLMVSTNKLSMLLNRYHLINRSLERMRKDIKRGKNKRILKKRQLQISLIKWVIKAVDENTLKKKWITTWVDVGSIFMTDVHRKDTSFINSLIEIVGNKLILRPIEKDKMKSTTYQILKIMNNDTDEIQMYRNEDMKYEVINNVDDINNVDNINNANNMNNVNNINNMNNMNNMNNMNNMNNMNNINNMNNINNMNNINNINNINNMNNILNDRLKNRINNKDNSNIKSKIFIFSESISSVFAVKYKNLSNIFTLDIIAKPNIKLYSDYDNLNNFTYNPVHVKKERTLFLPFSKDISDLDGDKFSCSFEDNIIYGKRLIHRLNSISVNISSIEKDMKYLLSNIIYVYDKNKRIPISYIYDMKNLIYEYQKVKQEFLYHLPWDEGDQKYLSRTDDVLNNSIIDNIGKKGPIFICEYINKFMDLYFEENDICYDYCSMLNIWDKIFNNTVSDGDSLLLSNLYRVVHNAFKNNNKYNNNNIYFDNNINININSSSSSSSRSRRNIYNFDNYYNNRRDYNSFWEDRHNILMNRENFLINTSTDKVFSGGKNNELKEFTSIRYKRRRWYWRVFYTIMFIIFFPVLFIYRRIIKRRKGSSKGNKIGTSSNNKLIKKNRTFKDYEDDENNIMSEDEEDDLDMNYDLIFDDDRLKVKKIKRMRKNYNNNNNNNNNKNNNNISNNNSNSNSKSNRFLSKLSNIDLANIDLNLIKKSHGKKMDNFEQPTLVDILARHARDSTHNDGVSYYPFNENETYNMLSLNYAWGGNHKHMNVERTSEYNMGNISHQLNYNNIRNLGDNKISAYELDIYEKELFHLYRRRAASQDVLNKKSFVMKKRIRSSYKVGSSNKYHKKNYTDNEKDKKKYRSYKEKHINEKMFDKKEFLNFLTNFNKKFMKKNSLVDHLIKMNDKAEDNYDGYNSSGSRYNNINDDGVELCGTKRYTNNKNNSDYDNYNNNNNMKNKRYSNKKHNNDNIIINNNNNKYTDERKYRNKSIKEDVDYTNDYYNIQLNNNKINNNQTKNKIDTIRNISHEKLGNNKSSSARNLSLIQTSHIPYDAPLADFLENGRFLRTFENISLIGQGGFGSVYKVSHRLEPGSPTYAVKFIYLKVSSLDNVSSRRYFREIAANRDIYSKHVVRYYTWWCEEPQFLPMHLMPKEIQNLVKKNKDTFKKRLTKNKKYSNNCISDSSNNNNSSCYSASSYNSSINSNYRNMKLWIKKKEQSPDMKRYKEVLRKNNAPNLVFYSDNDGLTSKNKENPEKNHNPFLSDKNFSDSIYKKKKSHDYNSSSHKLKKRKNKKKKSKKKRKSKSKIKTNAQGIYEESENDEGRDHFQYKKGKEQFSKFIGKHNSMGFTQSFQEYDPFDNGYLSEEDRDLIVFADNEESNGNDQQMIRHDNMNNENVIIKHRNEDDKNGLDGDKNGLDGDKNGLDGDKNGLDGDKNGLDGDKNELDGDKNGLDGDKNGLDGDKNGLDGDKNELDDNTKKLDDNTKKLDDLLMKQKINSLTRNDIVNIENENPAPHATNNIKNKKVDLNGELTYYDYVGKNEVIPNSRTETNVESINTNGMFNNKFSVMKDEGGEYKKKENMTWGDTKRDGLYENGKHEKDGLGVNKCITNKYIENDDDDDDDDDNNNNNNNIDERKKDLKKKQKNAITKGNEDLLATNGTNNKEKRKKDDDINKNMEKIKSYKKKTPVPEFSIVLLLQMELCKGYTLRKWLDRSTRSDKPLHFTYSDKKMNHPLEFDLFKQLIKGLKDIHATCFIHRDLKPENIFVDPDTYTLKIGDLGLVRFIEEKKREKDFNNIDCYKDNIYTDINQNAITSQISIKGQIIGTPGYTAPEGGALCDEKADIYSAALILLELLCPRFTTIMERYKRLNDFRNYYTVPDYVKIHLNPWYILMLQMSKPNPADRPSAADVYSKIKVLLDPHLTDFAFSFNDIHNEHMNKPPQGTNNFERITDNKDKFVIQSVVDMKNKVENEEIPIEKGLNSNVENIKNENNGADK</sequence>
<accession>C6KTB8</accession>
<reference evidence="12" key="1">
    <citation type="journal article" date="2002" name="Nature">
        <title>Genome sequence of the human malaria parasite Plasmodium falciparum.</title>
        <authorList>
            <person name="Gardner M.J."/>
            <person name="Hall N."/>
            <person name="Fung E."/>
            <person name="White O."/>
            <person name="Berriman M."/>
            <person name="Hyman R.W."/>
            <person name="Carlton J.M."/>
            <person name="Pain A."/>
            <person name="Nelson K.E."/>
            <person name="Bowman S."/>
            <person name="Paulsen I.T."/>
            <person name="James K.D."/>
            <person name="Eisen J.A."/>
            <person name="Rutherford K.M."/>
            <person name="Salzberg S.L."/>
            <person name="Craig A."/>
            <person name="Kyes S."/>
            <person name="Chan M.-S."/>
            <person name="Nene V."/>
            <person name="Shallom S.J."/>
            <person name="Suh B."/>
            <person name="Peterson J."/>
            <person name="Angiuoli S."/>
            <person name="Pertea M."/>
            <person name="Allen J."/>
            <person name="Selengut J."/>
            <person name="Haft D."/>
            <person name="Mather M.W."/>
            <person name="Vaidya A.B."/>
            <person name="Martin D.M.A."/>
            <person name="Fairlamb A.H."/>
            <person name="Fraunholz M.J."/>
            <person name="Roos D.S."/>
            <person name="Ralph S.A."/>
            <person name="McFadden G.I."/>
            <person name="Cummings L.M."/>
            <person name="Subramanian G.M."/>
            <person name="Mungall C."/>
            <person name="Venter J.C."/>
            <person name="Carucci D.J."/>
            <person name="Hoffman S.L."/>
            <person name="Newbold C."/>
            <person name="Davis R.W."/>
            <person name="Fraser C.M."/>
            <person name="Barrell B.G."/>
        </authorList>
    </citation>
    <scope>NUCLEOTIDE SEQUENCE [LARGE SCALE GENOMIC DNA]</scope>
    <source>
        <strain evidence="12">3D7</strain>
    </source>
</reference>
<reference evidence="12" key="2">
    <citation type="journal article" date="2002" name="Nature">
        <title>Sequence of Plasmodium falciparum chromosomes 1, 3-9 and 13.</title>
        <authorList>
            <person name="Hall N."/>
            <person name="Pain A."/>
            <person name="Berriman M."/>
            <person name="Churcher C.M."/>
            <person name="Harris B."/>
            <person name="Harris D."/>
            <person name="Mungall K.L."/>
            <person name="Bowman S."/>
            <person name="Atkin R."/>
            <person name="Baker S."/>
            <person name="Barron A."/>
            <person name="Brooks K."/>
            <person name="Buckee C.O."/>
            <person name="Burrows C."/>
            <person name="Cherevach I."/>
            <person name="Chillingworth C."/>
            <person name="Chillingworth T."/>
            <person name="Christodoulou Z."/>
            <person name="Clark L."/>
            <person name="Clark R."/>
            <person name="Corton C."/>
            <person name="Cronin A."/>
            <person name="Davies R.M."/>
            <person name="Davis P."/>
            <person name="Dear P."/>
            <person name="Dearden F."/>
            <person name="Doggett J."/>
            <person name="Feltwell T."/>
            <person name="Goble A."/>
            <person name="Goodhead I."/>
            <person name="Gwilliam R."/>
            <person name="Hamlin N."/>
            <person name="Hance Z."/>
            <person name="Harper D."/>
            <person name="Hauser H."/>
            <person name="Hornsby T."/>
            <person name="Holroyd S."/>
            <person name="Horrocks P."/>
            <person name="Humphray S."/>
            <person name="Jagels K."/>
            <person name="James K.D."/>
            <person name="Johnson D."/>
            <person name="Kerhornou A."/>
            <person name="Knights A."/>
            <person name="Konfortov B."/>
            <person name="Kyes S."/>
            <person name="Larke N."/>
            <person name="Lawson D."/>
            <person name="Lennard N."/>
            <person name="Line A."/>
            <person name="Maddison M."/>
            <person name="Mclean J."/>
            <person name="Mooney P."/>
            <person name="Moule S."/>
            <person name="Murphy L."/>
            <person name="Oliver K."/>
            <person name="Ormond D."/>
            <person name="Price C."/>
            <person name="Quail M.A."/>
            <person name="Rabbinowitsch E."/>
            <person name="Rajandream M.A."/>
            <person name="Rutter S."/>
            <person name="Rutherford K.M."/>
            <person name="Sanders M."/>
            <person name="Simmonds M."/>
            <person name="Seeger K."/>
            <person name="Sharp S."/>
            <person name="Smith R."/>
            <person name="Squares R."/>
            <person name="Squares S."/>
            <person name="Stevens K."/>
            <person name="Taylor K."/>
            <person name="Tivey A."/>
            <person name="Unwin L."/>
            <person name="Whitehead S."/>
            <person name="Woodward J.R."/>
            <person name="Sulston J.E."/>
            <person name="Craig A."/>
            <person name="Newbold C."/>
            <person name="Barrell B.G."/>
        </authorList>
    </citation>
    <scope>NUCLEOTIDE SEQUENCE [LARGE SCALE GENOMIC DNA]</scope>
    <source>
        <strain evidence="12">3D7</strain>
    </source>
</reference>
<reference evidence="9" key="3">
    <citation type="journal article" date="2012" name="Proc. Natl. Acad. Sci. U.S.A.">
        <title>PK4, a eukaryotic initiation factor 2alpha(eIF2alpha) kinase, is essential for the development of the erythrocytic cycle of Plasmodium.</title>
        <authorList>
            <person name="Zhang M."/>
            <person name="Mishra S."/>
            <person name="Sakthivel R."/>
            <person name="Rojas M."/>
            <person name="Ranjan R."/>
            <person name="Sullivan W.J. Jr."/>
            <person name="Fontoura B.M."/>
            <person name="Menard R."/>
            <person name="Dever T.E."/>
            <person name="Nussenzweig V."/>
        </authorList>
    </citation>
    <scope>FUNCTION</scope>
    <scope>CATALYTIC ACTIVITY</scope>
</reference>
<reference evidence="9" key="4">
    <citation type="journal article" date="2017" name="Cell Host Microbe">
        <title>Inhibiting the Plasmodium eIF2alpha Kinase PK4 Prevents Artemisinin-Induced Latency.</title>
        <authorList>
            <person name="Zhang M."/>
            <person name="Gallego-Delgado J."/>
            <person name="Fernandez-Arias C."/>
            <person name="Waters N.C."/>
            <person name="Rodriguez A."/>
            <person name="Tsuji M."/>
            <person name="Wek R.C."/>
            <person name="Nussenzweig V."/>
            <person name="Sullivan W.J. Jr."/>
        </authorList>
    </citation>
    <scope>FUNCTION</scope>
    <scope>CATALYTIC ACTIVITY</scope>
    <scope>ACTIVITY REGULATION</scope>
    <scope>SUBUNIT</scope>
    <scope>DEVELOPMENTAL STAGE</scope>
    <scope>PHOSPHORYLATION</scope>
</reference>
<comment type="function">
    <text evidence="6 7">During the asexual blood stage, phosphorylates translation factor eIF2alpha in late schizonts resulting in protein translation inhibition (PubMed:22355110, PubMed:29241041). Plays a role in trophozoite differentiation into schizonts (PubMed:29241041).</text>
</comment>
<comment type="catalytic activity">
    <reaction evidence="6 7">
        <text>L-seryl-[protein] + ATP = O-phospho-L-seryl-[protein] + ADP + H(+)</text>
        <dbReference type="Rhea" id="RHEA:17989"/>
        <dbReference type="Rhea" id="RHEA-COMP:9863"/>
        <dbReference type="Rhea" id="RHEA-COMP:11604"/>
        <dbReference type="ChEBI" id="CHEBI:15378"/>
        <dbReference type="ChEBI" id="CHEBI:29999"/>
        <dbReference type="ChEBI" id="CHEBI:30616"/>
        <dbReference type="ChEBI" id="CHEBI:83421"/>
        <dbReference type="ChEBI" id="CHEBI:456216"/>
        <dbReference type="EC" id="2.7.11.1"/>
    </reaction>
    <physiologicalReaction direction="left-to-right" evidence="6 7">
        <dbReference type="Rhea" id="RHEA:17990"/>
    </physiologicalReaction>
</comment>
<comment type="catalytic activity">
    <reaction evidence="1">
        <text>L-threonyl-[protein] + ATP = O-phospho-L-threonyl-[protein] + ADP + H(+)</text>
        <dbReference type="Rhea" id="RHEA:46608"/>
        <dbReference type="Rhea" id="RHEA-COMP:11060"/>
        <dbReference type="Rhea" id="RHEA-COMP:11605"/>
        <dbReference type="ChEBI" id="CHEBI:15378"/>
        <dbReference type="ChEBI" id="CHEBI:30013"/>
        <dbReference type="ChEBI" id="CHEBI:30616"/>
        <dbReference type="ChEBI" id="CHEBI:61977"/>
        <dbReference type="ChEBI" id="CHEBI:456216"/>
        <dbReference type="EC" id="2.7.11.1"/>
    </reaction>
    <physiologicalReaction direction="left-to-right" evidence="1">
        <dbReference type="Rhea" id="RHEA:46609"/>
    </physiologicalReaction>
</comment>
<comment type="activity regulation">
    <text evidence="10">Dissociation from BIP and oligomerization, may results autophosphorylation and kinase activity induction.</text>
</comment>
<comment type="subunit">
    <text evidence="1 7">May form oligomers in response to stress; oligomerization may result in catalytic activity (PubMed:29241041). Interacts with BIP; the interaction is disrupted in response to stress (By similarity).</text>
</comment>
<comment type="subcellular location">
    <subcellularLocation>
        <location evidence="1">Endoplasmic reticulum membrane</location>
        <topology evidence="3">Multi-pass membrane protein</topology>
    </subcellularLocation>
</comment>
<comment type="developmental stage">
    <text evidence="7">Expressed during the asexual blood stage (at protein level).</text>
</comment>
<comment type="PTM">
    <text evidence="7">Auto-phosphorylated.</text>
</comment>
<comment type="similarity">
    <text evidence="9">Belongs to the protein kinase superfamily. Ser/Thr protein kinase family. GCN2 subfamily.</text>
</comment>
<comment type="caution">
    <text evidence="2">Smaller forms of 80-90kDa appear to be present in the asexual blood stage suggesting that the protein may be proteolytically cleaved (By similarity). They localize to the cytoplasm in schizonts, to organelles in all blood stages and to the host erythrocyte membrane during schizont segmentation (By similarity).</text>
</comment>
<feature type="chain" id="PRO_0000456975" description="Eukaryotic translation initiation factor 2-alpha kinase PK4">
    <location>
        <begin position="1"/>
        <end position="3072"/>
    </location>
</feature>
<feature type="topological domain" description="Cytoplasmic" evidence="9">
    <location>
        <begin position="1"/>
        <end position="106"/>
    </location>
</feature>
<feature type="transmembrane region" description="Helical" evidence="3">
    <location>
        <begin position="107"/>
        <end position="127"/>
    </location>
</feature>
<feature type="topological domain" description="Lumenal" evidence="9">
    <location>
        <begin position="128"/>
        <end position="1643"/>
    </location>
</feature>
<feature type="transmembrane region" description="Helical" evidence="3">
    <location>
        <begin position="1644"/>
        <end position="1664"/>
    </location>
</feature>
<feature type="topological domain" description="Cytoplasmic" evidence="9">
    <location>
        <begin position="1665"/>
        <end position="3072"/>
    </location>
</feature>
<feature type="repeat" description="1" evidence="2">
    <location>
        <begin position="2483"/>
        <end position="2489"/>
    </location>
</feature>
<feature type="repeat" description="2" evidence="2">
    <location>
        <begin position="2490"/>
        <end position="2496"/>
    </location>
</feature>
<feature type="repeat" description="3" evidence="2">
    <location>
        <begin position="2497"/>
        <end position="2503"/>
    </location>
</feature>
<feature type="repeat" description="4" evidence="2">
    <location>
        <begin position="2504"/>
        <end position="2510"/>
    </location>
</feature>
<feature type="repeat" description="5" evidence="2">
    <location>
        <begin position="2511"/>
        <end position="2517"/>
    </location>
</feature>
<feature type="repeat" description="6" evidence="2">
    <location>
        <begin position="2518"/>
        <end position="2524"/>
    </location>
</feature>
<feature type="repeat" description="7" evidence="2">
    <location>
        <begin position="2525"/>
        <end position="2531"/>
    </location>
</feature>
<feature type="repeat" description="8" evidence="2">
    <location>
        <begin position="2532"/>
        <end position="2538"/>
    </location>
</feature>
<feature type="repeat" description="9" evidence="2">
    <location>
        <begin position="2539"/>
        <end position="2545"/>
    </location>
</feature>
<feature type="repeat" description="10" evidence="2">
    <location>
        <begin position="2546"/>
        <end position="2552"/>
    </location>
</feature>
<feature type="domain" description="Protein kinase" evidence="4">
    <location>
        <begin position="2627"/>
        <end position="2998"/>
    </location>
</feature>
<feature type="region of interest" description="Disordered" evidence="5">
    <location>
        <begin position="383"/>
        <end position="402"/>
    </location>
</feature>
<feature type="region of interest" description="10 X 7 AA tandem repeat of D-K-N-[GE]-L-D-[GD]" evidence="2">
    <location>
        <begin position="576"/>
        <end position="610"/>
    </location>
</feature>
<feature type="region of interest" description="Disordered" evidence="5">
    <location>
        <begin position="970"/>
        <end position="1010"/>
    </location>
</feature>
<feature type="region of interest" description="Disordered" evidence="5">
    <location>
        <begin position="1737"/>
        <end position="1766"/>
    </location>
</feature>
<feature type="region of interest" description="Disordered" evidence="5">
    <location>
        <begin position="1917"/>
        <end position="1937"/>
    </location>
</feature>
<feature type="region of interest" description="Disordered" evidence="5">
    <location>
        <begin position="2316"/>
        <end position="2402"/>
    </location>
</feature>
<feature type="region of interest" description="Disordered" evidence="5">
    <location>
        <begin position="2479"/>
        <end position="2558"/>
    </location>
</feature>
<feature type="region of interest" description="Disordered" evidence="5">
    <location>
        <begin position="2691"/>
        <end position="2749"/>
    </location>
</feature>
<feature type="compositionally biased region" description="Basic and acidic residues" evidence="5">
    <location>
        <begin position="978"/>
        <end position="996"/>
    </location>
</feature>
<feature type="compositionally biased region" description="Low complexity" evidence="5">
    <location>
        <begin position="997"/>
        <end position="1009"/>
    </location>
</feature>
<feature type="compositionally biased region" description="Low complexity" evidence="5">
    <location>
        <begin position="1738"/>
        <end position="1766"/>
    </location>
</feature>
<feature type="compositionally biased region" description="Basic and acidic residues" evidence="5">
    <location>
        <begin position="1928"/>
        <end position="1937"/>
    </location>
</feature>
<feature type="compositionally biased region" description="Basic and acidic residues" evidence="5">
    <location>
        <begin position="2326"/>
        <end position="2335"/>
    </location>
</feature>
<feature type="compositionally biased region" description="Basic residues" evidence="5">
    <location>
        <begin position="2362"/>
        <end position="2384"/>
    </location>
</feature>
<feature type="compositionally biased region" description="Acidic residues" evidence="5">
    <location>
        <begin position="2692"/>
        <end position="2702"/>
    </location>
</feature>
<feature type="active site" description="Proton acceptor" evidence="4">
    <location>
        <position position="2835"/>
    </location>
</feature>
<feature type="binding site" evidence="9">
    <location>
        <begin position="2152"/>
        <end position="2160"/>
    </location>
    <ligand>
        <name>ATP</name>
        <dbReference type="ChEBI" id="CHEBI:30616"/>
    </ligand>
</feature>
<feature type="binding site" evidence="9">
    <location>
        <position position="2177"/>
    </location>
    <ligand>
        <name>ATP</name>
        <dbReference type="ChEBI" id="CHEBI:30616"/>
    </ligand>
</feature>
<feature type="modified residue" description="Phosphothreonine" evidence="1">
    <location>
        <position position="2902"/>
    </location>
</feature>
<evidence type="ECO:0000250" key="1">
    <source>
        <dbReference type="UniProtKB" id="A0A509AMC3"/>
    </source>
</evidence>
<evidence type="ECO:0000250" key="2">
    <source>
        <dbReference type="UniProtKB" id="O43948"/>
    </source>
</evidence>
<evidence type="ECO:0000255" key="3"/>
<evidence type="ECO:0000255" key="4">
    <source>
        <dbReference type="PROSITE-ProRule" id="PRU00159"/>
    </source>
</evidence>
<evidence type="ECO:0000256" key="5">
    <source>
        <dbReference type="SAM" id="MobiDB-lite"/>
    </source>
</evidence>
<evidence type="ECO:0000269" key="6">
    <source>
    </source>
</evidence>
<evidence type="ECO:0000269" key="7">
    <source>
    </source>
</evidence>
<evidence type="ECO:0000303" key="8">
    <source>
    </source>
</evidence>
<evidence type="ECO:0000305" key="9"/>
<evidence type="ECO:0000305" key="10">
    <source>
    </source>
</evidence>
<evidence type="ECO:0000312" key="11">
    <source>
        <dbReference type="EMBL" id="CAG25095.1"/>
    </source>
</evidence>
<evidence type="ECO:0000312" key="12">
    <source>
        <dbReference type="Proteomes" id="UP000001450"/>
    </source>
</evidence>
<dbReference type="EC" id="2.7.11.1" evidence="6 7"/>
<dbReference type="EMBL" id="AL844505">
    <property type="protein sequence ID" value="CAG25095.1"/>
    <property type="molecule type" value="Genomic_DNA"/>
</dbReference>
<dbReference type="RefSeq" id="XP_966265.1">
    <property type="nucleotide sequence ID" value="XM_961172.1"/>
</dbReference>
<dbReference type="DIP" id="DIP-60022N"/>
<dbReference type="FunCoup" id="C6KTB8">
    <property type="interactions" value="4"/>
</dbReference>
<dbReference type="IntAct" id="C6KTB8">
    <property type="interactions" value="12"/>
</dbReference>
<dbReference type="STRING" id="36329.C6KTB8"/>
<dbReference type="PaxDb" id="5833-PFF1370w"/>
<dbReference type="EnsemblProtists" id="CAG25095">
    <property type="protein sequence ID" value="CAG25095"/>
    <property type="gene ID" value="PF3D7_0628200"/>
</dbReference>
<dbReference type="GeneID" id="3885723"/>
<dbReference type="KEGG" id="pfa:PF3D7_0628200"/>
<dbReference type="VEuPathDB" id="PlasmoDB:PF3D7_0628200"/>
<dbReference type="HOGENOM" id="CLU_227938_0_0_1"/>
<dbReference type="InParanoid" id="C6KTB8"/>
<dbReference type="OMA" id="NTIMERY"/>
<dbReference type="OrthoDB" id="1405469at2759"/>
<dbReference type="PhylomeDB" id="C6KTB8"/>
<dbReference type="Proteomes" id="UP000001450">
    <property type="component" value="Chromosome 6"/>
</dbReference>
<dbReference type="GO" id="GO:0005737">
    <property type="term" value="C:cytoplasm"/>
    <property type="evidence" value="ECO:0000318"/>
    <property type="project" value="GO_Central"/>
</dbReference>
<dbReference type="GO" id="GO:0005789">
    <property type="term" value="C:endoplasmic reticulum membrane"/>
    <property type="evidence" value="ECO:0007669"/>
    <property type="project" value="UniProtKB-SubCell"/>
</dbReference>
<dbReference type="GO" id="GO:0005634">
    <property type="term" value="C:nucleus"/>
    <property type="evidence" value="ECO:0000318"/>
    <property type="project" value="GO_Central"/>
</dbReference>
<dbReference type="GO" id="GO:0005524">
    <property type="term" value="F:ATP binding"/>
    <property type="evidence" value="ECO:0007669"/>
    <property type="project" value="UniProtKB-KW"/>
</dbReference>
<dbReference type="GO" id="GO:0004686">
    <property type="term" value="F:elongation factor-2 kinase activity"/>
    <property type="evidence" value="ECO:0000314"/>
    <property type="project" value="GeneDB"/>
</dbReference>
<dbReference type="GO" id="GO:0004694">
    <property type="term" value="F:eukaryotic translation initiation factor 2alpha kinase activity"/>
    <property type="evidence" value="ECO:0000314"/>
    <property type="project" value="UniProtKB"/>
</dbReference>
<dbReference type="GO" id="GO:0106310">
    <property type="term" value="F:protein serine kinase activity"/>
    <property type="evidence" value="ECO:0007669"/>
    <property type="project" value="RHEA"/>
</dbReference>
<dbReference type="GO" id="GO:0017148">
    <property type="term" value="P:negative regulation of translation"/>
    <property type="evidence" value="ECO:0007669"/>
    <property type="project" value="UniProtKB-KW"/>
</dbReference>
<dbReference type="GO" id="GO:0018105">
    <property type="term" value="P:peptidyl-serine phosphorylation"/>
    <property type="evidence" value="ECO:0000314"/>
    <property type="project" value="UniProtKB"/>
</dbReference>
<dbReference type="GO" id="GO:0006468">
    <property type="term" value="P:protein phosphorylation"/>
    <property type="evidence" value="ECO:0000314"/>
    <property type="project" value="GeneDB"/>
</dbReference>
<dbReference type="GO" id="GO:0010998">
    <property type="term" value="P:regulation of translational initiation by eIF2 alpha phosphorylation"/>
    <property type="evidence" value="ECO:0000314"/>
    <property type="project" value="UniProtKB"/>
</dbReference>
<dbReference type="CDD" id="cd13996">
    <property type="entry name" value="STKc_EIF2AK"/>
    <property type="match status" value="1"/>
</dbReference>
<dbReference type="FunFam" id="1.10.510.10:FF:000615">
    <property type="entry name" value="Eukaryotic translation initiation factor 2-alpha kinase"/>
    <property type="match status" value="1"/>
</dbReference>
<dbReference type="FunFam" id="3.30.200.20:FF:000516">
    <property type="entry name" value="Protein kinase PK4, putative"/>
    <property type="match status" value="1"/>
</dbReference>
<dbReference type="Gene3D" id="3.30.200.20">
    <property type="entry name" value="Phosphorylase Kinase, domain 1"/>
    <property type="match status" value="1"/>
</dbReference>
<dbReference type="Gene3D" id="1.10.510.10">
    <property type="entry name" value="Transferase(Phosphotransferase) domain 1"/>
    <property type="match status" value="1"/>
</dbReference>
<dbReference type="InterPro" id="IPR050339">
    <property type="entry name" value="CC_SR_Kinase"/>
</dbReference>
<dbReference type="InterPro" id="IPR011009">
    <property type="entry name" value="Kinase-like_dom_sf"/>
</dbReference>
<dbReference type="InterPro" id="IPR000719">
    <property type="entry name" value="Prot_kinase_dom"/>
</dbReference>
<dbReference type="InterPro" id="IPR017441">
    <property type="entry name" value="Protein_kinase_ATP_BS"/>
</dbReference>
<dbReference type="InterPro" id="IPR008271">
    <property type="entry name" value="Ser/Thr_kinase_AS"/>
</dbReference>
<dbReference type="PANTHER" id="PTHR11042:SF160">
    <property type="entry name" value="EUKARYOTIC TRANSLATION INITIATION FACTOR 2-ALPHA KINASE 1"/>
    <property type="match status" value="1"/>
</dbReference>
<dbReference type="PANTHER" id="PTHR11042">
    <property type="entry name" value="EUKARYOTIC TRANSLATION INITIATION FACTOR 2-ALPHA KINASE EIF2-ALPHA KINASE -RELATED"/>
    <property type="match status" value="1"/>
</dbReference>
<dbReference type="Pfam" id="PF00069">
    <property type="entry name" value="Pkinase"/>
    <property type="match status" value="1"/>
</dbReference>
<dbReference type="SMART" id="SM00220">
    <property type="entry name" value="S_TKc"/>
    <property type="match status" value="1"/>
</dbReference>
<dbReference type="SUPFAM" id="SSF56112">
    <property type="entry name" value="Protein kinase-like (PK-like)"/>
    <property type="match status" value="1"/>
</dbReference>
<dbReference type="PROSITE" id="PS00107">
    <property type="entry name" value="PROTEIN_KINASE_ATP"/>
    <property type="match status" value="1"/>
</dbReference>
<dbReference type="PROSITE" id="PS50011">
    <property type="entry name" value="PROTEIN_KINASE_DOM"/>
    <property type="match status" value="1"/>
</dbReference>
<dbReference type="PROSITE" id="PS00108">
    <property type="entry name" value="PROTEIN_KINASE_ST"/>
    <property type="match status" value="1"/>
</dbReference>
<organism evidence="12">
    <name type="scientific">Plasmodium falciparum (isolate 3D7)</name>
    <dbReference type="NCBI Taxonomy" id="36329"/>
    <lineage>
        <taxon>Eukaryota</taxon>
        <taxon>Sar</taxon>
        <taxon>Alveolata</taxon>
        <taxon>Apicomplexa</taxon>
        <taxon>Aconoidasida</taxon>
        <taxon>Haemosporida</taxon>
        <taxon>Plasmodiidae</taxon>
        <taxon>Plasmodium</taxon>
        <taxon>Plasmodium (Laverania)</taxon>
    </lineage>
</organism>
<proteinExistence type="evidence at protein level"/>
<name>PK4_PLAF7</name>